<organism>
    <name type="scientific">Escherichia coli (strain K12)</name>
    <dbReference type="NCBI Taxonomy" id="83333"/>
    <lineage>
        <taxon>Bacteria</taxon>
        <taxon>Pseudomonadati</taxon>
        <taxon>Pseudomonadota</taxon>
        <taxon>Gammaproteobacteria</taxon>
        <taxon>Enterobacterales</taxon>
        <taxon>Enterobacteriaceae</taxon>
        <taxon>Escherichia</taxon>
    </lineage>
</organism>
<reference key="1">
    <citation type="journal article" date="1992" name="Nucleic Acids Res.">
        <title>Systematic sequencing of the Escherichia coli genome: analysis of the 0-2.4 min region.</title>
        <authorList>
            <person name="Yura T."/>
            <person name="Mori H."/>
            <person name="Nagai H."/>
            <person name="Nagata T."/>
            <person name="Ishihama A."/>
            <person name="Fujita N."/>
            <person name="Isono K."/>
            <person name="Mizobuchi K."/>
            <person name="Nakata A."/>
        </authorList>
    </citation>
    <scope>NUCLEOTIDE SEQUENCE [LARGE SCALE GENOMIC DNA]</scope>
    <source>
        <strain>K12</strain>
    </source>
</reference>
<reference key="2">
    <citation type="journal article" date="1997" name="Science">
        <title>The complete genome sequence of Escherichia coli K-12.</title>
        <authorList>
            <person name="Blattner F.R."/>
            <person name="Plunkett G. III"/>
            <person name="Bloch C.A."/>
            <person name="Perna N.T."/>
            <person name="Burland V."/>
            <person name="Riley M."/>
            <person name="Collado-Vides J."/>
            <person name="Glasner J.D."/>
            <person name="Rode C.K."/>
            <person name="Mayhew G.F."/>
            <person name="Gregor J."/>
            <person name="Davis N.W."/>
            <person name="Kirkpatrick H.A."/>
            <person name="Goeden M.A."/>
            <person name="Rose D.J."/>
            <person name="Mau B."/>
            <person name="Shao Y."/>
        </authorList>
    </citation>
    <scope>NUCLEOTIDE SEQUENCE [LARGE SCALE GENOMIC DNA]</scope>
    <source>
        <strain>K12 / MG1655 / ATCC 47076</strain>
    </source>
</reference>
<reference key="3">
    <citation type="journal article" date="2006" name="Nucleic Acids Res.">
        <title>Escherichia coli K-12: a cooperatively developed annotation snapshot -- 2005.</title>
        <authorList>
            <person name="Riley M."/>
            <person name="Abe T."/>
            <person name="Arnaud M.B."/>
            <person name="Berlyn M.K.B."/>
            <person name="Blattner F.R."/>
            <person name="Chaudhuri R.R."/>
            <person name="Glasner J.D."/>
            <person name="Horiuchi T."/>
            <person name="Keseler I.M."/>
            <person name="Kosuge T."/>
            <person name="Mori H."/>
            <person name="Perna N.T."/>
            <person name="Plunkett G. III"/>
            <person name="Rudd K.E."/>
            <person name="Serres M.H."/>
            <person name="Thomas G.H."/>
            <person name="Thomson N.R."/>
            <person name="Wishart D."/>
            <person name="Wanner B.L."/>
        </authorList>
    </citation>
    <scope>SEQUENCE REVISION TO 128</scope>
</reference>
<reference key="4">
    <citation type="journal article" date="2006" name="Mol. Syst. Biol.">
        <title>Highly accurate genome sequences of Escherichia coli K-12 strains MG1655 and W3110.</title>
        <authorList>
            <person name="Hayashi K."/>
            <person name="Morooka N."/>
            <person name="Yamamoto Y."/>
            <person name="Fujita K."/>
            <person name="Isono K."/>
            <person name="Choi S."/>
            <person name="Ohtsubo E."/>
            <person name="Baba T."/>
            <person name="Wanner B.L."/>
            <person name="Mori H."/>
            <person name="Horiuchi T."/>
        </authorList>
    </citation>
    <scope>NUCLEOTIDE SEQUENCE [LARGE SCALE GENOMIC DNA]</scope>
    <scope>SEQUENCE REVISION TO 56</scope>
    <source>
        <strain>K12 / W3110 / ATCC 27325 / DSM 5911</strain>
    </source>
</reference>
<reference key="5">
    <citation type="journal article" date="1999" name="Mol. Microbiol.">
        <title>The identification of a new family of sugar efflux pumps in Escherichia coli.</title>
        <authorList>
            <person name="Liu J.Y."/>
            <person name="Miller P.F."/>
            <person name="Gosink M."/>
            <person name="Olson E.R."/>
        </authorList>
    </citation>
    <scope>CHARACTERIZATION</scope>
</reference>
<reference key="6">
    <citation type="journal article" date="1999" name="J. Biol. Chem.">
        <title>Functional and biochemical characterization of Escherichia coli sugar efflux transporters.</title>
        <authorList>
            <person name="Liu J.Y."/>
            <person name="Miller P.F."/>
            <person name="Willard J."/>
            <person name="Olson E.R."/>
        </authorList>
    </citation>
    <scope>CHARACTERIZATION</scope>
</reference>
<reference key="7">
    <citation type="journal article" date="2005" name="Science">
        <title>Global topology analysis of the Escherichia coli inner membrane proteome.</title>
        <authorList>
            <person name="Daley D.O."/>
            <person name="Rapp M."/>
            <person name="Granseth E."/>
            <person name="Melen K."/>
            <person name="Drew D."/>
            <person name="von Heijne G."/>
        </authorList>
    </citation>
    <scope>TOPOLOGY [LARGE SCALE ANALYSIS]</scope>
    <source>
        <strain>K12 / MG1655 / ATCC 47076</strain>
    </source>
</reference>
<comment type="function">
    <text>Involved in the efflux of sugars. The physiological role may be the detoxification of non-metabolizable sugar analogs. Can transport IPTG, lactose and glucose. Has broad substrate specificity, with preferences for glucosides or galactosides with alkyl or aryl substituents.</text>
</comment>
<comment type="subcellular location">
    <subcellularLocation>
        <location>Cell inner membrane</location>
        <topology>Multi-pass membrane protein</topology>
    </subcellularLocation>
</comment>
<comment type="similarity">
    <text evidence="2">Belongs to the major facilitator superfamily. Set transporter family.</text>
</comment>
<accession>P31675</accession>
<accession>P75639</accession>
<accession>Q6BF91</accession>
<feature type="chain" id="PRO_0000209359" description="Sugar efflux transporter A">
    <location>
        <begin position="1"/>
        <end position="392"/>
    </location>
</feature>
<feature type="topological domain" description="Cytoplasmic" evidence="1">
    <location>
        <begin position="1"/>
        <end position="10"/>
    </location>
</feature>
<feature type="transmembrane region" description="Helical" evidence="1">
    <location>
        <begin position="11"/>
        <end position="31"/>
    </location>
</feature>
<feature type="topological domain" description="Periplasmic" evidence="1">
    <location>
        <begin position="32"/>
        <end position="48"/>
    </location>
</feature>
<feature type="transmembrane region" description="Helical" evidence="1">
    <location>
        <begin position="49"/>
        <end position="69"/>
    </location>
</feature>
<feature type="topological domain" description="Cytoplasmic" evidence="1">
    <location>
        <begin position="70"/>
        <end position="81"/>
    </location>
</feature>
<feature type="transmembrane region" description="Helical" evidence="1">
    <location>
        <begin position="82"/>
        <end position="102"/>
    </location>
</feature>
<feature type="topological domain" description="Periplasmic" evidence="1">
    <location>
        <begin position="103"/>
        <end position="106"/>
    </location>
</feature>
<feature type="transmembrane region" description="Helical" evidence="1">
    <location>
        <begin position="107"/>
        <end position="127"/>
    </location>
</feature>
<feature type="topological domain" description="Cytoplasmic" evidence="1">
    <location>
        <begin position="128"/>
        <end position="149"/>
    </location>
</feature>
<feature type="transmembrane region" description="Helical" evidence="1">
    <location>
        <begin position="150"/>
        <end position="170"/>
    </location>
</feature>
<feature type="topological domain" description="Periplasmic" evidence="1">
    <location>
        <position position="171"/>
    </location>
</feature>
<feature type="transmembrane region" description="Helical" evidence="1">
    <location>
        <begin position="172"/>
        <end position="192"/>
    </location>
</feature>
<feature type="topological domain" description="Cytoplasmic" evidence="1">
    <location>
        <begin position="193"/>
        <end position="219"/>
    </location>
</feature>
<feature type="transmembrane region" description="Helical" evidence="1">
    <location>
        <begin position="220"/>
        <end position="240"/>
    </location>
</feature>
<feature type="topological domain" description="Periplasmic" evidence="1">
    <location>
        <begin position="241"/>
        <end position="251"/>
    </location>
</feature>
<feature type="transmembrane region" description="Helical" evidence="1">
    <location>
        <begin position="252"/>
        <end position="272"/>
    </location>
</feature>
<feature type="topological domain" description="Cytoplasmic" evidence="1">
    <location>
        <begin position="273"/>
        <end position="282"/>
    </location>
</feature>
<feature type="transmembrane region" description="Helical" evidence="1">
    <location>
        <begin position="283"/>
        <end position="303"/>
    </location>
</feature>
<feature type="topological domain" description="Periplasmic" evidence="1">
    <location>
        <begin position="304"/>
        <end position="308"/>
    </location>
</feature>
<feature type="transmembrane region" description="Helical" evidence="1">
    <location>
        <begin position="309"/>
        <end position="329"/>
    </location>
</feature>
<feature type="topological domain" description="Cytoplasmic" evidence="1">
    <location>
        <begin position="330"/>
        <end position="342"/>
    </location>
</feature>
<feature type="transmembrane region" description="Helical" evidence="1">
    <location>
        <begin position="343"/>
        <end position="363"/>
    </location>
</feature>
<feature type="topological domain" description="Periplasmic" evidence="1">
    <location>
        <begin position="364"/>
        <end position="365"/>
    </location>
</feature>
<feature type="transmembrane region" description="Helical" evidence="1">
    <location>
        <begin position="366"/>
        <end position="386"/>
    </location>
</feature>
<feature type="topological domain" description="Cytoplasmic" evidence="1">
    <location>
        <begin position="387"/>
        <end position="392"/>
    </location>
</feature>
<sequence length="392" mass="42713">MIWIMTMARRMNGVYAAFMLVAFMMGVAGALQAPTLSLFLSREVGAQPFWIGLFYTVNAIAGIGVSLWLAKRSDSQGDRRKLIIFCCLMAIGNALLFAFNRHYLTLITCGVLLASLANTAMPQLFALAREYADNSAREVVMFSSVMRAQLSLAWVIGPPLAFMLALNYGFTVMFSIAAGIFTLSLVLIAFMLPSVARVELPSENALSMQGGWQDSNVRMLFVASTLMWTCNTMYIIDMPLWISSELGLPDKLAGFLMGTAAGLEIPAMILAGYYVKRYGKRRMMVIAVAAGVLFYTGLIFFNSRMALMTLQLFNAVFIGIVAGIGMLWFQDLMPGRAGAATTLFTNSISTGVILAGVIQGAIAQSWGHFAVYWVIAVISVVALFLTAKVKDV</sequence>
<keyword id="KW-0997">Cell inner membrane</keyword>
<keyword id="KW-1003">Cell membrane</keyword>
<keyword id="KW-0472">Membrane</keyword>
<keyword id="KW-1185">Reference proteome</keyword>
<keyword id="KW-0762">Sugar transport</keyword>
<keyword id="KW-0812">Transmembrane</keyword>
<keyword id="KW-1133">Transmembrane helix</keyword>
<keyword id="KW-0813">Transport</keyword>
<dbReference type="EMBL" id="U00096">
    <property type="protein sequence ID" value="AAT48123.1"/>
    <property type="molecule type" value="Genomic_DNA"/>
</dbReference>
<dbReference type="EMBL" id="AP009048">
    <property type="protein sequence ID" value="BAB96639.2"/>
    <property type="molecule type" value="Genomic_DNA"/>
</dbReference>
<dbReference type="PIR" id="F64728">
    <property type="entry name" value="F64728"/>
</dbReference>
<dbReference type="RefSeq" id="WP_000637847.1">
    <property type="nucleotide sequence ID" value="NZ_LN832404.1"/>
</dbReference>
<dbReference type="RefSeq" id="YP_025293.1">
    <property type="nucleotide sequence ID" value="NC_000913.3"/>
</dbReference>
<dbReference type="SMR" id="P31675"/>
<dbReference type="FunCoup" id="P31675">
    <property type="interactions" value="34"/>
</dbReference>
<dbReference type="STRING" id="511145.b0070"/>
<dbReference type="TCDB" id="2.A.1.20.1">
    <property type="family name" value="the major facilitator superfamily (mfs)"/>
</dbReference>
<dbReference type="PaxDb" id="511145-b0070"/>
<dbReference type="EnsemblBacteria" id="AAT48123">
    <property type="protein sequence ID" value="AAT48123"/>
    <property type="gene ID" value="b0070"/>
</dbReference>
<dbReference type="GeneID" id="944793"/>
<dbReference type="KEGG" id="ecj:JW0069"/>
<dbReference type="KEGG" id="eco:b0070"/>
<dbReference type="PATRIC" id="fig|1411691.4.peg.2211"/>
<dbReference type="EchoBASE" id="EB1704"/>
<dbReference type="eggNOG" id="COG2814">
    <property type="taxonomic scope" value="Bacteria"/>
</dbReference>
<dbReference type="HOGENOM" id="CLU_055598_3_0_6"/>
<dbReference type="InParanoid" id="P31675"/>
<dbReference type="OMA" id="GAQPFWV"/>
<dbReference type="OrthoDB" id="7337792at2"/>
<dbReference type="PhylomeDB" id="P31675"/>
<dbReference type="BioCyc" id="EcoCyc:B0070-MONOMER"/>
<dbReference type="BioCyc" id="MetaCyc:B0070-MONOMER"/>
<dbReference type="PRO" id="PR:P31675"/>
<dbReference type="Proteomes" id="UP000000625">
    <property type="component" value="Chromosome"/>
</dbReference>
<dbReference type="GO" id="GO:0016020">
    <property type="term" value="C:membrane"/>
    <property type="evidence" value="ECO:0000314"/>
    <property type="project" value="EcoliWiki"/>
</dbReference>
<dbReference type="GO" id="GO:0005886">
    <property type="term" value="C:plasma membrane"/>
    <property type="evidence" value="ECO:0000314"/>
    <property type="project" value="EcoCyc"/>
</dbReference>
<dbReference type="GO" id="GO:0005351">
    <property type="term" value="F:carbohydrate:proton symporter activity"/>
    <property type="evidence" value="ECO:0000318"/>
    <property type="project" value="GO_Central"/>
</dbReference>
<dbReference type="GO" id="GO:0034219">
    <property type="term" value="P:carbohydrate transmembrane transport"/>
    <property type="evidence" value="ECO:0000314"/>
    <property type="project" value="EcoCyc"/>
</dbReference>
<dbReference type="GO" id="GO:0036448">
    <property type="term" value="P:cellular response to glucose-phosphate stress"/>
    <property type="evidence" value="ECO:0000315"/>
    <property type="project" value="EcoCyc"/>
</dbReference>
<dbReference type="GO" id="GO:1904659">
    <property type="term" value="P:D-glucose transmembrane transport"/>
    <property type="evidence" value="ECO:0000314"/>
    <property type="project" value="EcoliWiki"/>
</dbReference>
<dbReference type="GO" id="GO:0015767">
    <property type="term" value="P:lactose transport"/>
    <property type="evidence" value="ECO:0000314"/>
    <property type="project" value="EcoliWiki"/>
</dbReference>
<dbReference type="CDD" id="cd17471">
    <property type="entry name" value="MFS_Set"/>
    <property type="match status" value="1"/>
</dbReference>
<dbReference type="FunFam" id="1.20.1250.20:FF:000125">
    <property type="entry name" value="Sugar efflux transporter SetB"/>
    <property type="match status" value="1"/>
</dbReference>
<dbReference type="FunFam" id="1.20.1250.20:FF:000151">
    <property type="entry name" value="Sugar efflux transporter SetB"/>
    <property type="match status" value="1"/>
</dbReference>
<dbReference type="Gene3D" id="1.20.1250.20">
    <property type="entry name" value="MFS general substrate transporter like domains"/>
    <property type="match status" value="2"/>
</dbReference>
<dbReference type="InterPro" id="IPR011701">
    <property type="entry name" value="MFS"/>
</dbReference>
<dbReference type="InterPro" id="IPR020846">
    <property type="entry name" value="MFS_dom"/>
</dbReference>
<dbReference type="InterPro" id="IPR036259">
    <property type="entry name" value="MFS_trans_sf"/>
</dbReference>
<dbReference type="InterPro" id="IPR004750">
    <property type="entry name" value="Sugar_efflux"/>
</dbReference>
<dbReference type="NCBIfam" id="TIGR00899">
    <property type="entry name" value="2A0120"/>
    <property type="match status" value="1"/>
</dbReference>
<dbReference type="PANTHER" id="PTHR23535">
    <property type="entry name" value="SUGAR EFFLUX TRANSPORTER A-RELATED"/>
    <property type="match status" value="1"/>
</dbReference>
<dbReference type="PANTHER" id="PTHR23535:SF2">
    <property type="entry name" value="SUGAR EFFLUX TRANSPORTER A-RELATED"/>
    <property type="match status" value="1"/>
</dbReference>
<dbReference type="Pfam" id="PF07690">
    <property type="entry name" value="MFS_1"/>
    <property type="match status" value="1"/>
</dbReference>
<dbReference type="SUPFAM" id="SSF103473">
    <property type="entry name" value="MFS general substrate transporter"/>
    <property type="match status" value="1"/>
</dbReference>
<dbReference type="PROSITE" id="PS50850">
    <property type="entry name" value="MFS"/>
    <property type="match status" value="1"/>
</dbReference>
<proteinExistence type="evidence at protein level"/>
<evidence type="ECO:0000255" key="1"/>
<evidence type="ECO:0000305" key="2"/>
<gene>
    <name type="primary">setA</name>
    <name type="synonym">yabM</name>
    <name type="ordered locus">b0070</name>
    <name type="ordered locus">JW0069</name>
</gene>
<name>SETA_ECOLI</name>
<protein>
    <recommendedName>
        <fullName>Sugar efflux transporter A</fullName>
    </recommendedName>
</protein>